<proteinExistence type="inferred from homology"/>
<feature type="chain" id="PRO_1000092164" description="Sulfate adenylyltransferase subunit 1">
    <location>
        <begin position="1"/>
        <end position="478"/>
    </location>
</feature>
<feature type="domain" description="tr-type G">
    <location>
        <begin position="24"/>
        <end position="240"/>
    </location>
</feature>
<feature type="region of interest" description="G1" evidence="1">
    <location>
        <begin position="33"/>
        <end position="40"/>
    </location>
</feature>
<feature type="region of interest" description="G2" evidence="1">
    <location>
        <begin position="91"/>
        <end position="95"/>
    </location>
</feature>
<feature type="region of interest" description="G3" evidence="1">
    <location>
        <begin position="112"/>
        <end position="115"/>
    </location>
</feature>
<feature type="region of interest" description="G4" evidence="1">
    <location>
        <begin position="167"/>
        <end position="170"/>
    </location>
</feature>
<feature type="region of interest" description="G5" evidence="1">
    <location>
        <begin position="206"/>
        <end position="208"/>
    </location>
</feature>
<feature type="binding site" evidence="2">
    <location>
        <begin position="33"/>
        <end position="40"/>
    </location>
    <ligand>
        <name>GTP</name>
        <dbReference type="ChEBI" id="CHEBI:37565"/>
    </ligand>
</feature>
<feature type="binding site" evidence="2">
    <location>
        <begin position="112"/>
        <end position="116"/>
    </location>
    <ligand>
        <name>GTP</name>
        <dbReference type="ChEBI" id="CHEBI:37565"/>
    </ligand>
</feature>
<feature type="binding site" evidence="2">
    <location>
        <begin position="167"/>
        <end position="170"/>
    </location>
    <ligand>
        <name>GTP</name>
        <dbReference type="ChEBI" id="CHEBI:37565"/>
    </ligand>
</feature>
<gene>
    <name evidence="2" type="primary">cysN</name>
    <name type="ordered locus">VFMJ11_0308</name>
</gene>
<accession>B5FGJ9</accession>
<reference key="1">
    <citation type="submission" date="2008-08" db="EMBL/GenBank/DDBJ databases">
        <title>Complete sequence of Vibrio fischeri strain MJ11.</title>
        <authorList>
            <person name="Mandel M.J."/>
            <person name="Stabb E.V."/>
            <person name="Ruby E.G."/>
            <person name="Ferriera S."/>
            <person name="Johnson J."/>
            <person name="Kravitz S."/>
            <person name="Beeson K."/>
            <person name="Sutton G."/>
            <person name="Rogers Y.-H."/>
            <person name="Friedman R."/>
            <person name="Frazier M."/>
            <person name="Venter J.C."/>
        </authorList>
    </citation>
    <scope>NUCLEOTIDE SEQUENCE [LARGE SCALE GENOMIC DNA]</scope>
    <source>
        <strain>MJ11</strain>
    </source>
</reference>
<dbReference type="EC" id="2.7.7.4" evidence="2"/>
<dbReference type="EMBL" id="CP001139">
    <property type="protein sequence ID" value="ACH65113.1"/>
    <property type="molecule type" value="Genomic_DNA"/>
</dbReference>
<dbReference type="RefSeq" id="WP_012532830.1">
    <property type="nucleotide sequence ID" value="NC_011184.1"/>
</dbReference>
<dbReference type="SMR" id="B5FGJ9"/>
<dbReference type="KEGG" id="vfm:VFMJ11_0308"/>
<dbReference type="HOGENOM" id="CLU_007265_5_2_6"/>
<dbReference type="UniPathway" id="UPA00140">
    <property type="reaction ID" value="UER00204"/>
</dbReference>
<dbReference type="Proteomes" id="UP000001857">
    <property type="component" value="Chromosome I"/>
</dbReference>
<dbReference type="GO" id="GO:0005524">
    <property type="term" value="F:ATP binding"/>
    <property type="evidence" value="ECO:0007669"/>
    <property type="project" value="UniProtKB-KW"/>
</dbReference>
<dbReference type="GO" id="GO:0005525">
    <property type="term" value="F:GTP binding"/>
    <property type="evidence" value="ECO:0007669"/>
    <property type="project" value="UniProtKB-UniRule"/>
</dbReference>
<dbReference type="GO" id="GO:0003924">
    <property type="term" value="F:GTPase activity"/>
    <property type="evidence" value="ECO:0007669"/>
    <property type="project" value="InterPro"/>
</dbReference>
<dbReference type="GO" id="GO:0004781">
    <property type="term" value="F:sulfate adenylyltransferase (ATP) activity"/>
    <property type="evidence" value="ECO:0007669"/>
    <property type="project" value="UniProtKB-UniRule"/>
</dbReference>
<dbReference type="GO" id="GO:0070814">
    <property type="term" value="P:hydrogen sulfide biosynthetic process"/>
    <property type="evidence" value="ECO:0007669"/>
    <property type="project" value="UniProtKB-UniRule"/>
</dbReference>
<dbReference type="GO" id="GO:0000103">
    <property type="term" value="P:sulfate assimilation"/>
    <property type="evidence" value="ECO:0007669"/>
    <property type="project" value="UniProtKB-UniRule"/>
</dbReference>
<dbReference type="CDD" id="cd04166">
    <property type="entry name" value="CysN_ATPS"/>
    <property type="match status" value="1"/>
</dbReference>
<dbReference type="CDD" id="cd03695">
    <property type="entry name" value="CysN_NodQ_II"/>
    <property type="match status" value="1"/>
</dbReference>
<dbReference type="CDD" id="cd04095">
    <property type="entry name" value="CysN_NoDQ_III"/>
    <property type="match status" value="1"/>
</dbReference>
<dbReference type="FunFam" id="2.40.30.10:FF:000027">
    <property type="entry name" value="Sulfate adenylyltransferase subunit 1"/>
    <property type="match status" value="1"/>
</dbReference>
<dbReference type="FunFam" id="2.40.30.10:FF:000031">
    <property type="entry name" value="Sulfate adenylyltransferase subunit 1"/>
    <property type="match status" value="1"/>
</dbReference>
<dbReference type="FunFam" id="3.40.50.300:FF:000119">
    <property type="entry name" value="Sulfate adenylyltransferase subunit 1"/>
    <property type="match status" value="1"/>
</dbReference>
<dbReference type="Gene3D" id="3.40.50.300">
    <property type="entry name" value="P-loop containing nucleotide triphosphate hydrolases"/>
    <property type="match status" value="1"/>
</dbReference>
<dbReference type="Gene3D" id="2.40.30.10">
    <property type="entry name" value="Translation factors"/>
    <property type="match status" value="2"/>
</dbReference>
<dbReference type="HAMAP" id="MF_00062">
    <property type="entry name" value="Sulf_adenylyltr_sub1"/>
    <property type="match status" value="1"/>
</dbReference>
<dbReference type="InterPro" id="IPR041757">
    <property type="entry name" value="CysN_GTP-bd"/>
</dbReference>
<dbReference type="InterPro" id="IPR044138">
    <property type="entry name" value="CysN_II"/>
</dbReference>
<dbReference type="InterPro" id="IPR044139">
    <property type="entry name" value="CysN_NoDQ_III"/>
</dbReference>
<dbReference type="InterPro" id="IPR031157">
    <property type="entry name" value="G_TR_CS"/>
</dbReference>
<dbReference type="InterPro" id="IPR054696">
    <property type="entry name" value="GTP-eEF1A_C"/>
</dbReference>
<dbReference type="InterPro" id="IPR027417">
    <property type="entry name" value="P-loop_NTPase"/>
</dbReference>
<dbReference type="InterPro" id="IPR011779">
    <property type="entry name" value="SO4_adenylTrfase_lsu"/>
</dbReference>
<dbReference type="InterPro" id="IPR000795">
    <property type="entry name" value="T_Tr_GTP-bd_dom"/>
</dbReference>
<dbReference type="InterPro" id="IPR050100">
    <property type="entry name" value="TRAFAC_GTPase_members"/>
</dbReference>
<dbReference type="InterPro" id="IPR009000">
    <property type="entry name" value="Transl_B-barrel_sf"/>
</dbReference>
<dbReference type="InterPro" id="IPR009001">
    <property type="entry name" value="Transl_elong_EF1A/Init_IF2_C"/>
</dbReference>
<dbReference type="NCBIfam" id="TIGR02034">
    <property type="entry name" value="CysN"/>
    <property type="match status" value="1"/>
</dbReference>
<dbReference type="NCBIfam" id="NF003478">
    <property type="entry name" value="PRK05124.1"/>
    <property type="match status" value="1"/>
</dbReference>
<dbReference type="PANTHER" id="PTHR23115">
    <property type="entry name" value="TRANSLATION FACTOR"/>
    <property type="match status" value="1"/>
</dbReference>
<dbReference type="Pfam" id="PF22594">
    <property type="entry name" value="GTP-eEF1A_C"/>
    <property type="match status" value="1"/>
</dbReference>
<dbReference type="Pfam" id="PF00009">
    <property type="entry name" value="GTP_EFTU"/>
    <property type="match status" value="1"/>
</dbReference>
<dbReference type="PRINTS" id="PR00315">
    <property type="entry name" value="ELONGATNFCT"/>
</dbReference>
<dbReference type="SUPFAM" id="SSF50465">
    <property type="entry name" value="EF-Tu/eEF-1alpha/eIF2-gamma C-terminal domain"/>
    <property type="match status" value="1"/>
</dbReference>
<dbReference type="SUPFAM" id="SSF52540">
    <property type="entry name" value="P-loop containing nucleoside triphosphate hydrolases"/>
    <property type="match status" value="1"/>
</dbReference>
<dbReference type="SUPFAM" id="SSF50447">
    <property type="entry name" value="Translation proteins"/>
    <property type="match status" value="1"/>
</dbReference>
<dbReference type="PROSITE" id="PS00301">
    <property type="entry name" value="G_TR_1"/>
    <property type="match status" value="1"/>
</dbReference>
<dbReference type="PROSITE" id="PS51722">
    <property type="entry name" value="G_TR_2"/>
    <property type="match status" value="1"/>
</dbReference>
<comment type="function">
    <text evidence="2">With CysD forms the ATP sulfurylase (ATPS) that catalyzes the adenylation of sulfate producing adenosine 5'-phosphosulfate (APS) and diphosphate, the first enzymatic step in sulfur assimilation pathway. APS synthesis involves the formation of a high-energy phosphoric-sulfuric acid anhydride bond driven by GTP hydrolysis by CysN coupled to ATP hydrolysis by CysD.</text>
</comment>
<comment type="catalytic activity">
    <reaction evidence="2">
        <text>sulfate + ATP + H(+) = adenosine 5'-phosphosulfate + diphosphate</text>
        <dbReference type="Rhea" id="RHEA:18133"/>
        <dbReference type="ChEBI" id="CHEBI:15378"/>
        <dbReference type="ChEBI" id="CHEBI:16189"/>
        <dbReference type="ChEBI" id="CHEBI:30616"/>
        <dbReference type="ChEBI" id="CHEBI:33019"/>
        <dbReference type="ChEBI" id="CHEBI:58243"/>
        <dbReference type="EC" id="2.7.7.4"/>
    </reaction>
</comment>
<comment type="pathway">
    <text evidence="2">Sulfur metabolism; hydrogen sulfide biosynthesis; sulfite from sulfate: step 1/3.</text>
</comment>
<comment type="subunit">
    <text evidence="2">Heterodimer composed of CysD, the smaller subunit, and CysN.</text>
</comment>
<comment type="similarity">
    <text evidence="2">Belongs to the TRAFAC class translation factor GTPase superfamily. Classic translation factor GTPase family. CysN/NodQ subfamily.</text>
</comment>
<evidence type="ECO:0000250" key="1"/>
<evidence type="ECO:0000255" key="2">
    <source>
        <dbReference type="HAMAP-Rule" id="MF_00062"/>
    </source>
</evidence>
<organism>
    <name type="scientific">Aliivibrio fischeri (strain MJ11)</name>
    <name type="common">Vibrio fischeri</name>
    <dbReference type="NCBI Taxonomy" id="388396"/>
    <lineage>
        <taxon>Bacteria</taxon>
        <taxon>Pseudomonadati</taxon>
        <taxon>Pseudomonadota</taxon>
        <taxon>Gammaproteobacteria</taxon>
        <taxon>Vibrionales</taxon>
        <taxon>Vibrionaceae</taxon>
        <taxon>Aliivibrio</taxon>
    </lineage>
</organism>
<sequence length="478" mass="52893">MNSAVEQQLAELGIEAYLKEHQYKSLLRFLTCGSVDDGKSTLIGRLLHDSKQIYADQLDAVHADSQRVGTTGERPDLALLVDGLQAEREQGITIDVAYRYFSTQKRKFIIADTPGHEQYTRNMATGASTCNVAVILIDARKGVLDQTRRHSYIANLLGIRHFIVAVNKMDLVEYSQSRFEEIKEEYLAFSKKLNNPNLDISILPLSALEGDNVVNPSEALSWYQGEPLLEVLENVDIDADKGNGEFRFPVQYVNRPNLDFRGFAGTVSSGGISVGDEIVALPSGKKSKVARIVTFDGDLTSAQAGQAVTLTLEDEIDISRGDLLVKSQSNLQATDQFKAEIVWMTEKGLEPGRQYDIKIAGKKTVGQIDAIHHQVNINSLEKFDTQELPLNGIGLCDVSLTETVSLDRYQDCADTGGFIFIDRLTNVTVGAGMIQNLSDLSETKPINDNISAFEIELNALIRKHFPHWETQDISKLLG</sequence>
<protein>
    <recommendedName>
        <fullName evidence="2">Sulfate adenylyltransferase subunit 1</fullName>
        <ecNumber evidence="2">2.7.7.4</ecNumber>
    </recommendedName>
    <alternativeName>
        <fullName evidence="2">ATP-sulfurylase large subunit</fullName>
    </alternativeName>
    <alternativeName>
        <fullName evidence="2">Sulfate adenylate transferase</fullName>
        <shortName evidence="2">SAT</shortName>
    </alternativeName>
</protein>
<keyword id="KW-0067">ATP-binding</keyword>
<keyword id="KW-0342">GTP-binding</keyword>
<keyword id="KW-0547">Nucleotide-binding</keyword>
<keyword id="KW-0548">Nucleotidyltransferase</keyword>
<keyword id="KW-0808">Transferase</keyword>
<name>CYSN_ALIFM</name>